<accession>P03204</accession>
<accession>Q777E7</accession>
<organism>
    <name type="scientific">Epstein-Barr virus (strain B95-8)</name>
    <name type="common">HHV-4</name>
    <name type="synonym">Human herpesvirus 4</name>
    <dbReference type="NCBI Taxonomy" id="10377"/>
    <lineage>
        <taxon>Viruses</taxon>
        <taxon>Duplodnaviria</taxon>
        <taxon>Heunggongvirae</taxon>
        <taxon>Peploviricota</taxon>
        <taxon>Herviviricetes</taxon>
        <taxon>Herpesvirales</taxon>
        <taxon>Orthoherpesviridae</taxon>
        <taxon>Gammaherpesvirinae</taxon>
        <taxon>Lymphocryptovirus</taxon>
        <taxon>Lymphocryptovirus humangamma4</taxon>
        <taxon>Epstein-Barr virus (strain GD1)</taxon>
    </lineage>
</organism>
<protein>
    <recommendedName>
        <fullName>Epstein-Barr nuclear antigen 6</fullName>
        <shortName>EBNA-6</shortName>
        <shortName>EBV nuclear antigen 6</shortName>
    </recommendedName>
    <alternativeName>
        <fullName>Epstein-Barr nuclear antigen 3C</fullName>
        <shortName>EBNA-3C</shortName>
        <shortName>EBV nuclear antigen 3C</shortName>
    </alternativeName>
    <alternativeName>
        <fullName>Epstein-Barr nuclear antigen 4B</fullName>
        <shortName>EBNA-4B</shortName>
        <shortName>EBV nuclear antigen 4B</shortName>
    </alternativeName>
</protein>
<reference key="1">
    <citation type="journal article" date="1984" name="Nature">
        <title>DNA sequence and expression of the B95-8 Epstein-Barr virus genome.</title>
        <authorList>
            <person name="Baer R."/>
            <person name="Bankier A.T."/>
            <person name="Biggin M.D."/>
            <person name="Deininger P.L."/>
            <person name="Farrell P.J."/>
            <person name="Gibson T.J."/>
            <person name="Hatfull G."/>
            <person name="Hudson G.S."/>
            <person name="Satchwell S.C."/>
            <person name="Seguin C."/>
            <person name="Tuffnell P.S."/>
            <person name="Barrell B.G."/>
        </authorList>
    </citation>
    <scope>NUCLEOTIDE SEQUENCE [LARGE SCALE GENOMIC DNA]</scope>
</reference>
<reference key="2">
    <citation type="journal article" date="2003" name="Virology">
        <title>Updated Epstein-Barr virus (EBV) DNA sequence and analysis of a promoter for the BART (CST, BARF0) RNAs of EBV.</title>
        <authorList>
            <person name="de Jesus O."/>
            <person name="Smith P.R."/>
            <person name="Spender L.C."/>
            <person name="Elgueta Karstegl C."/>
            <person name="Niller H.H."/>
            <person name="Huang D."/>
            <person name="Farrell P.J."/>
        </authorList>
    </citation>
    <scope>GENOME REANNOTATION</scope>
</reference>
<reference key="3">
    <citation type="journal article" date="1988" name="J. Virol.">
        <title>A fifth Epstein-Barr virus nuclear protein (EBNA3C) is expressed in latently infected growth-transformed lymphocytes.</title>
        <authorList>
            <person name="Petti L."/>
            <person name="Sample J."/>
            <person name="Wang F."/>
            <person name="Kieff E."/>
        </authorList>
    </citation>
    <scope>CHARACTERIZATION</scope>
</reference>
<reference key="4">
    <citation type="journal article" date="1996" name="J. Virol.">
        <title>The amino-terminal domains of Epstein-Barr virus nuclear proteins 3A, 3B, and 3C interact with RBPJ(kappa).</title>
        <authorList>
            <person name="Robertson E.S."/>
            <person name="Lin J."/>
            <person name="Kieff E."/>
        </authorList>
    </citation>
    <scope>INTERACTION WITH HUMAN RBPJ</scope>
    <scope>FUNCTION</scope>
</reference>
<reference key="5">
    <citation type="journal article" date="1990" name="Virology">
        <title>Subnuclear localization and phosphorylation of Epstein-Barr virus latent infection nuclear proteins.</title>
        <authorList>
            <person name="Petti L."/>
            <person name="Sample C."/>
            <person name="Kieff E."/>
        </authorList>
    </citation>
    <scope>SUBCELLULAR LOCATION</scope>
</reference>
<reference key="6">
    <citation type="journal article" date="2001" name="J. Virol.">
        <title>Physical and functional interactions between the corepressor CtBP and the Epstein-Barr virus nuclear antigen EBNA3C.</title>
        <authorList>
            <person name="Touitou R."/>
            <person name="Hickabottom M."/>
            <person name="Parker G."/>
            <person name="Crook T."/>
            <person name="Allday M.J."/>
        </authorList>
    </citation>
    <scope>INTERACTION WITH HUMAN CTBP1</scope>
</reference>
<reference key="7">
    <citation type="journal article" date="2005" name="Proc. Natl. Acad. Sci. U.S.A.">
        <title>Epstein-Barr virus latent antigen 3C can mediate the degradation of the retinoblastoma protein through an SCF cellular ubiquitin ligase.</title>
        <authorList>
            <person name="Knight J.S."/>
            <person name="Sharma N."/>
            <person name="Robertson E.S."/>
        </authorList>
    </citation>
    <scope>FUNCTION</scope>
</reference>
<reference key="8">
    <citation type="journal article" date="2008" name="J. Virol.">
        <title>Epstein-Barr virus nuclear antigen 3C interacts with and enhances the stability of the c-Myc oncoprotein.</title>
        <authorList>
            <person name="Bajaj B.G."/>
            <person name="Murakami M."/>
            <person name="Cai Q."/>
            <person name="Verma S.C."/>
            <person name="Lan K."/>
            <person name="Robertson E.S."/>
        </authorList>
    </citation>
    <scope>INTERACTION WITH HUMAN MYC</scope>
</reference>
<reference key="9">
    <citation type="journal article" date="2014" name="J. Virol.">
        <title>Epstein-Barr virus essential antigen EBNA3C attenuates H2AX expression.</title>
        <authorList>
            <person name="Jha H.C."/>
            <person name="Aj M.P."/>
            <person name="Saha A."/>
            <person name="Banerjee S."/>
            <person name="Lu J."/>
            <person name="Robertson E.S."/>
        </authorList>
    </citation>
    <scope>INTERACTION WITH HOST HISTONE H2AX</scope>
    <scope>SUBCELLULAR LOCATION</scope>
    <scope>FUNCTION</scope>
</reference>
<reference key="10">
    <citation type="journal article" date="2014" name="PLoS Pathog.">
        <title>EBNA3C augments Pim-1 mediated phosphorylation and degradation of p21 to promote B-cell proliferation.</title>
        <authorList>
            <person name="Banerjee S."/>
            <person name="Lu J."/>
            <person name="Cai Q."/>
            <person name="Sun Z."/>
            <person name="Jha H.C."/>
            <person name="Robertson E.S."/>
        </authorList>
    </citation>
    <scope>FUNCTION</scope>
    <scope>SUBCELLULAR LOCATION</scope>
    <scope>INTERACTION WITH HOST PIM1</scope>
</reference>
<reference key="11">
    <citation type="journal article" date="2014" name="Virology">
        <title>Epstein-Barr virus nuclear antigen 3C interact with p73: Interplay between a viral oncoprotein and cellular tumor suppressor.</title>
        <authorList>
            <person name="Sahu S.K."/>
            <person name="Mohanty S."/>
            <person name="Kumar A."/>
            <person name="Kundu C.N."/>
            <person name="Verma S.C."/>
            <person name="Choudhuri T."/>
        </authorList>
    </citation>
    <scope>INTERACTION WITH HOST TP73</scope>
    <scope>SUBCELLULAR LOCATION</scope>
</reference>
<reference key="12">
    <citation type="journal article" date="2015" name="J. Virol.">
        <title>Epstein-Barr Virus Nuclear Antigen 3 (EBNA3) Proteins Regulate EBNA2 Binding to Distinct RBPJ Genomic Sites.</title>
        <authorList>
            <person name="Wang A."/>
            <person name="Welch R."/>
            <person name="Zhao B."/>
            <person name="Ta T."/>
            <person name="Keles S."/>
            <person name="Johannsen E."/>
        </authorList>
    </citation>
    <scope>FUNCTION</scope>
</reference>
<reference key="13">
    <citation type="journal article" date="2021" name="PLoS Pathog.">
        <title>Epstein-Barr virus nuclear antigen 3C (EBNA3C) interacts with the metabolism sensing C-terminal binding protein (CtBP) repressor to upregulate host genes.</title>
        <authorList>
            <person name="Ohashi M."/>
            <person name="Hayes M."/>
            <person name="McChesney K."/>
            <person name="Johannsen E."/>
        </authorList>
    </citation>
    <scope>INTERACTION WITH HOST CTBP1</scope>
</reference>
<reference key="14">
    <citation type="journal article" date="2005" name="Eur. J. Immunol.">
        <title>Crystal structures and KIR3DL1 recognition of three immunodominant viral peptides complexed to HLA-B*2705.</title>
        <authorList>
            <person name="Stewart-Jones G.B."/>
            <person name="di Gleria K."/>
            <person name="Kollnberger S."/>
            <person name="McMichael A.J."/>
            <person name="Jones E.Y."/>
            <person name="Bowness P."/>
        </authorList>
    </citation>
    <scope>X-RAY CRYSTALLOGRAPHY (2.3 ANGSTROMS) OF 258-266</scope>
</reference>
<reference key="15">
    <citation type="journal article" date="2009" name="J. Exp. Med.">
        <title>Natural micropolymorphism in human leukocyte antigens provides a basis for genetic control of antigen recognition.</title>
        <authorList>
            <person name="Archbold J.K."/>
            <person name="Macdonald W.A."/>
            <person name="Gras S."/>
            <person name="Ely L.K."/>
            <person name="Miles J.J."/>
            <person name="Bell M.J."/>
            <person name="Brennan R.M."/>
            <person name="Beddoe T."/>
            <person name="Wilce M.C."/>
            <person name="Clements C.S."/>
            <person name="Purcell A.W."/>
            <person name="McCluskey J."/>
            <person name="Burrows S.R."/>
            <person name="Rossjohn J."/>
        </authorList>
    </citation>
    <scope>X-RAY CRYSTALLOGRAPHY (3.5 ANGSTROMS) OF 281-290</scope>
</reference>
<feature type="chain" id="PRO_0000116179" description="Epstein-Barr nuclear antigen 6">
    <location>
        <begin position="1"/>
        <end position="992"/>
    </location>
</feature>
<feature type="repeat" description="1-1; approximate">
    <location>
        <begin position="551"/>
        <end position="555"/>
    </location>
</feature>
<feature type="repeat" description="2-1; approximate">
    <location>
        <begin position="556"/>
        <end position="560"/>
    </location>
</feature>
<feature type="repeat" description="3-1; approximate">
    <location>
        <begin position="561"/>
        <end position="565"/>
    </location>
</feature>
<feature type="repeat" description="4-1">
    <location>
        <begin position="566"/>
        <end position="570"/>
    </location>
</feature>
<feature type="repeat" description="5-1">
    <location>
        <begin position="571"/>
        <end position="575"/>
    </location>
</feature>
<feature type="repeat" description="6-1">
    <location>
        <begin position="576"/>
        <end position="580"/>
    </location>
</feature>
<feature type="repeat" description="7-1">
    <location>
        <begin position="581"/>
        <end position="585"/>
    </location>
</feature>
<feature type="repeat" description="8-1">
    <location>
        <begin position="586"/>
        <end position="590"/>
    </location>
</feature>
<feature type="repeat" description="9-1">
    <location>
        <begin position="591"/>
        <end position="595"/>
    </location>
</feature>
<feature type="repeat" description="10-1; approximate">
    <location>
        <begin position="596"/>
        <end position="600"/>
    </location>
</feature>
<feature type="repeat" description="11-1; approximate">
    <location>
        <begin position="601"/>
        <end position="605"/>
    </location>
</feature>
<feature type="repeat" description="12-1">
    <location>
        <begin position="606"/>
        <end position="610"/>
    </location>
</feature>
<feature type="repeat" description="1-2">
    <location>
        <begin position="741"/>
        <end position="753"/>
    </location>
</feature>
<feature type="repeat" description="2-2">
    <location>
        <begin position="754"/>
        <end position="766"/>
    </location>
</feature>
<feature type="repeat" description="3-2">
    <location>
        <begin position="767"/>
        <end position="779"/>
    </location>
</feature>
<feature type="region of interest" description="Disordered" evidence="1">
    <location>
        <begin position="1"/>
        <end position="70"/>
    </location>
</feature>
<feature type="region of interest" description="Interaction with host PIM1" evidence="8">
    <location>
        <begin position="130"/>
        <end position="159"/>
    </location>
</feature>
<feature type="region of interest" description="Disordered" evidence="1">
    <location>
        <begin position="355"/>
        <end position="905"/>
    </location>
</feature>
<feature type="region of interest" description="12 X 5 AA approximate tandem repeats of P-P-A-A-G">
    <location>
        <begin position="551"/>
        <end position="610"/>
    </location>
</feature>
<feature type="region of interest" description="3 X 13 AA tandem repeats of P-[AP]-P-Q-A-P-Y-Q-G-Y-Q-E-P">
    <location>
        <begin position="741"/>
        <end position="779"/>
    </location>
</feature>
<feature type="region of interest" description="Disordered" evidence="1">
    <location>
        <begin position="931"/>
        <end position="954"/>
    </location>
</feature>
<feature type="region of interest" description="Disordered" evidence="1">
    <location>
        <begin position="967"/>
        <end position="992"/>
    </location>
</feature>
<feature type="compositionally biased region" description="Basic and acidic residues" evidence="1">
    <location>
        <begin position="12"/>
        <end position="31"/>
    </location>
</feature>
<feature type="compositionally biased region" description="Acidic residues" evidence="1">
    <location>
        <begin position="381"/>
        <end position="391"/>
    </location>
</feature>
<feature type="compositionally biased region" description="Polar residues" evidence="1">
    <location>
        <begin position="445"/>
        <end position="461"/>
    </location>
</feature>
<feature type="compositionally biased region" description="Pro residues" evidence="1">
    <location>
        <begin position="479"/>
        <end position="495"/>
    </location>
</feature>
<feature type="compositionally biased region" description="Acidic residues" evidence="1">
    <location>
        <begin position="506"/>
        <end position="520"/>
    </location>
</feature>
<feature type="compositionally biased region" description="Pro residues" evidence="1">
    <location>
        <begin position="563"/>
        <end position="594"/>
    </location>
</feature>
<feature type="compositionally biased region" description="Low complexity" evidence="1">
    <location>
        <begin position="595"/>
        <end position="611"/>
    </location>
</feature>
<feature type="compositionally biased region" description="Polar residues" evidence="1">
    <location>
        <begin position="659"/>
        <end position="676"/>
    </location>
</feature>
<feature type="compositionally biased region" description="Polar residues" evidence="1">
    <location>
        <begin position="700"/>
        <end position="714"/>
    </location>
</feature>
<feature type="compositionally biased region" description="Basic and acidic residues" evidence="1">
    <location>
        <begin position="715"/>
        <end position="724"/>
    </location>
</feature>
<feature type="compositionally biased region" description="Low complexity" evidence="1">
    <location>
        <begin position="738"/>
        <end position="764"/>
    </location>
</feature>
<feature type="compositionally biased region" description="Low complexity" evidence="1">
    <location>
        <begin position="772"/>
        <end position="781"/>
    </location>
</feature>
<feature type="compositionally biased region" description="Polar residues" evidence="1">
    <location>
        <begin position="845"/>
        <end position="857"/>
    </location>
</feature>
<feature type="compositionally biased region" description="Low complexity" evidence="1">
    <location>
        <begin position="859"/>
        <end position="881"/>
    </location>
</feature>
<feature type="compositionally biased region" description="Pro residues" evidence="1">
    <location>
        <begin position="882"/>
        <end position="899"/>
    </location>
</feature>
<sequence length="992" mass="109129">MESFEGQGDSRQSPDNERGDNVQTTGEHDQDPGPGPPSSGASERLVPEESYSRDQQPWGQSRGDENRGWMQRIRRRRRRRAALSGHLLDTEDNVPPWLPPHDITPYTARNIRDAACRAVKQSHLQALSNLILDSGLDTQHILCFVMAARQRLQDIRRGPLVAEGGVGWRHWLLTSPSQSWPMGYRTATLRTLTPVPNRVGADSIMLTATFGCQNAARTLNTFSATVWTPPHAGPREQERYAREAEVRFLRGKWQRRYRRIYDLIELCGSLHHIWQNLLQTEENLLDFVRFMGVMSSCNNPAVNYWFHKTIGNFKPYYPWNAPPNENPYHARRGIKEHVIQNAFRKAQIQGLSMLATGGEPRGDATSETSSDEDTGRQGSDVELESSDDELPYIDPNMEPVQQRPVMFVSRVPAKKPRKLPWPTPKTHPVKRTNVKTSDRSDKAEAQSTPERPGPSEQSSVTVEPAHPTPVEMPMVILHQPPPVPKPVPVKPTPPPSRRRRGACVVYDDDVIEVIDVETTEDSSSVSQPNKPHRKHQDGFQRSGRRQKRAAPPTVSPSDTGPPAVGPPAAGPPAAGPPAAGPPAAGPPAAGPPAAGPRILAPLSAGPPAAGPHIVTPPSARPRIMAPPVVRMFMRERQLPQSTGRKPQCFWEMRAGREITQMQQEPSSHLQSATQPTTPRPSWAPSVCALSVMDAGKAQPIESSHLSSMSPTQPISHEEQPRYEDPDAPLDLSLHPDVAAQPAPQAPYQGYQEPPAPQAPYQGYQEPPPPQAPYQGYQEPPAHGLQSSSYPGYAGPWTPRSQHPCYRHPWAPWSQDPVHGHTQGPWDPRAPHLPPQWDGSAGHGQDQVSQFPHLQSETGPPRLQLSLVPLVSSSAPSWSSPQPRAPIRPIPTRFPPPPMPLQDSMAVGCDSSGTACPSMPFASDYSQGAFTPLDINATTPKRPRVEESSHGPARCSQATAEAQEILSDNSEISVFPKDAKQTDYDASTESELD</sequence>
<comment type="function">
    <text evidence="3 7 8 9 11">Plays an essential role for the activation and immortalization of human B-cells. Represses transcription of viral promoters TP1 and Cp through interaction with host RBPJ, and inhibits EBNA2-mediated activation of these promoters. Targets host chromatin through interactions with host transcription factors, especially RBPJ and IRF4 (PubMed:26719268, PubMed:8627785). Alternatively, EBNA6 also regulates the transcription of the EBV oncogene LMP1 in a cell cycle-dependent manner. Modulates the activity of several host proteins involved in cell cycle regulation including host cyclin A, MYC, RB, p21 and p27 mainly through binding to the host SCF(SKP2) complex (PubMed:16352731). Inhibits the promoter of host H2AX and targets H2AX to proteasomal degradation in order to promote latency and cell proliferation (PubMed:24429368). Upregulates host PIM1 expression and stabilization (PubMed:25121590). Potentiates PIM1 to promote cell proliferation by inhibiting the growth suppressive properties of p21 (PubMed:25121590).</text>
</comment>
<comment type="subunit">
    <text evidence="2 4 6 7 8 10 11">Interacts with host CTPB1; this interaction leads to gene repression, but also seems to interfere with the repressive function of CtBP pre-bound to DNA, leading to EBNA6 mediated up-regulation of many host genes (PubMed:11462050, PubMed:33720992). Interacts with host MYC; this interaction enhances MYC stability (PubMed:18256156). Interacts (via N-terminus) with host RBPJ (PubMed:8627785). Interacts (via N-terminus) with host histone H2AX; this interaction facilitates H2AX proteasomal degradation (PubMed:24429368). Interacts with host TP73; this interaction inhibits TP73-mediated apoptotic pathway (PubMed:24314664). Interacts (via N-terminus) with host PIM1; this interaction upregulates and stabilizes PIM1 and induces cell proliferation by inhibiting the growth suppressive properties of p21 (PubMed:25121590).</text>
</comment>
<comment type="interaction">
    <interactant intactId="EBI-9255985">
        <id>P03204</id>
    </interactant>
    <interactant intactId="EBI-750085">
        <id>Q9Y676</id>
        <label>MRPS18B</label>
    </interactant>
    <organismsDiffer>true</organismsDiffer>
    <experiments>6</experiments>
</comment>
<comment type="interaction">
    <interactant intactId="EBI-9255985">
        <id>P03204</id>
    </interactant>
    <interactant intactId="EBI-447544">
        <id>P01106</id>
        <label>MYC</label>
    </interactant>
    <organismsDiffer>true</organismsDiffer>
    <experiments>11</experiments>
</comment>
<comment type="interaction">
    <interactant intactId="EBI-9255985">
        <id>P03204</id>
    </interactant>
    <interactant intactId="EBI-632552">
        <id>Q06330</id>
        <label>RBPJ</label>
    </interactant>
    <organismsDiffer>true</organismsDiffer>
    <experiments>3</experiments>
</comment>
<comment type="subcellular location">
    <subcellularLocation>
        <location evidence="6 7 8">Host nucleus</location>
    </subcellularLocation>
    <subcellularLocation>
        <location evidence="5">Host nucleus matrix</location>
    </subcellularLocation>
    <text>Associated with the nuclear matrix.</text>
</comment>
<comment type="similarity">
    <text evidence="12">Belongs to the herpesviridae EBNA-6 family.</text>
</comment>
<keyword id="KW-0002">3D-structure</keyword>
<keyword id="KW-1078">G1/S host cell cycle checkpoint dysregulation by virus</keyword>
<keyword id="KW-1048">Host nucleus</keyword>
<keyword id="KW-0945">Host-virus interaction</keyword>
<keyword id="KW-1119">Modulation of host cell apoptosis by virus</keyword>
<keyword id="KW-1121">Modulation of host cell cycle by virus</keyword>
<keyword id="KW-1185">Reference proteome</keyword>
<keyword id="KW-0677">Repeat</keyword>
<keyword id="KW-0804">Transcription</keyword>
<keyword id="KW-0805">Transcription regulation</keyword>
<keyword id="KW-1251">Viral latency</keyword>
<keyword id="KW-1276">Viral latency initiation and maintenance</keyword>
<gene>
    <name type="primary">EBNA6</name>
    <name type="ORF">BERF3-BERF4</name>
</gene>
<name>EBNA6_EBVB9</name>
<evidence type="ECO:0000256" key="1">
    <source>
        <dbReference type="SAM" id="MobiDB-lite"/>
    </source>
</evidence>
<evidence type="ECO:0000269" key="2">
    <source>
    </source>
</evidence>
<evidence type="ECO:0000269" key="3">
    <source>
    </source>
</evidence>
<evidence type="ECO:0000269" key="4">
    <source>
    </source>
</evidence>
<evidence type="ECO:0000269" key="5">
    <source>
    </source>
</evidence>
<evidence type="ECO:0000269" key="6">
    <source>
    </source>
</evidence>
<evidence type="ECO:0000269" key="7">
    <source>
    </source>
</evidence>
<evidence type="ECO:0000269" key="8">
    <source>
    </source>
</evidence>
<evidence type="ECO:0000269" key="9">
    <source>
    </source>
</evidence>
<evidence type="ECO:0000269" key="10">
    <source>
    </source>
</evidence>
<evidence type="ECO:0000269" key="11">
    <source>
    </source>
</evidence>
<evidence type="ECO:0000305" key="12"/>
<dbReference type="EMBL" id="V01555">
    <property type="protein sequence ID" value="CAA24859.1"/>
    <property type="molecule type" value="Genomic_DNA"/>
</dbReference>
<dbReference type="EMBL" id="AJ507799">
    <property type="protein sequence ID" value="CAD53421.1"/>
    <property type="molecule type" value="Genomic_DNA"/>
</dbReference>
<dbReference type="PDB" id="1CG9">
    <property type="method" value="X-ray"/>
    <property type="resolution" value="2.70 A"/>
    <property type="chains" value="C=98-106"/>
</dbReference>
<dbReference type="PDB" id="2BSR">
    <property type="method" value="X-ray"/>
    <property type="resolution" value="2.30 A"/>
    <property type="chains" value="C=258-266"/>
</dbReference>
<dbReference type="PDB" id="3DX6">
    <property type="method" value="X-ray"/>
    <property type="resolution" value="1.70 A"/>
    <property type="chains" value="C=281-290"/>
</dbReference>
<dbReference type="PDB" id="3DX7">
    <property type="method" value="X-ray"/>
    <property type="resolution" value="1.60 A"/>
    <property type="chains" value="C=281-290"/>
</dbReference>
<dbReference type="PDB" id="3DX8">
    <property type="method" value="X-ray"/>
    <property type="resolution" value="2.10 A"/>
    <property type="chains" value="C=281-290"/>
</dbReference>
<dbReference type="PDB" id="3DXA">
    <property type="method" value="X-ray"/>
    <property type="resolution" value="3.50 A"/>
    <property type="chains" value="C/H/M=281-290"/>
</dbReference>
<dbReference type="PDBsum" id="1CG9"/>
<dbReference type="PDBsum" id="2BSR"/>
<dbReference type="PDBsum" id="3DX6"/>
<dbReference type="PDBsum" id="3DX7"/>
<dbReference type="PDBsum" id="3DX8"/>
<dbReference type="PDBsum" id="3DXA"/>
<dbReference type="SMR" id="P03204"/>
<dbReference type="BioGRID" id="3509134">
    <property type="interactions" value="3"/>
</dbReference>
<dbReference type="DIP" id="DIP-29893N"/>
<dbReference type="ELM" id="P03204"/>
<dbReference type="IntAct" id="P03204">
    <property type="interactions" value="7"/>
</dbReference>
<dbReference type="MINT" id="P03204"/>
<dbReference type="KEGG" id="vg:3783763"/>
<dbReference type="EvolutionaryTrace" id="P03204"/>
<dbReference type="Proteomes" id="UP000153037">
    <property type="component" value="Segment"/>
</dbReference>
<dbReference type="GO" id="GO:0044204">
    <property type="term" value="C:host cell nuclear matrix"/>
    <property type="evidence" value="ECO:0007669"/>
    <property type="project" value="UniProtKB-SubCell"/>
</dbReference>
<dbReference type="GO" id="GO:0052150">
    <property type="term" value="P:symbiont-mediated perturbation of host apoptosis"/>
    <property type="evidence" value="ECO:0007669"/>
    <property type="project" value="UniProtKB-KW"/>
</dbReference>
<dbReference type="GO" id="GO:0039645">
    <property type="term" value="P:symbiont-mediated perturbation of host cell cycle G1/S transition checkpoint"/>
    <property type="evidence" value="ECO:0007669"/>
    <property type="project" value="UniProtKB-KW"/>
</dbReference>
<dbReference type="GO" id="GO:0019042">
    <property type="term" value="P:viral latency"/>
    <property type="evidence" value="ECO:0007669"/>
    <property type="project" value="UniProtKB-KW"/>
</dbReference>
<dbReference type="InterPro" id="IPR007706">
    <property type="entry name" value="EBNA-3/4/6"/>
</dbReference>
<dbReference type="Pfam" id="PF05009">
    <property type="entry name" value="EBV-NA3"/>
    <property type="match status" value="1"/>
</dbReference>
<proteinExistence type="evidence at protein level"/>
<organismHost>
    <name type="scientific">Homo sapiens</name>
    <name type="common">Human</name>
    <dbReference type="NCBI Taxonomy" id="9606"/>
</organismHost>